<sequence>MENVEDKYNSPLKSQKLFIGAQICLRIVTIGATLAATWIMVTDKQSITFGDFVMVAKYNYSSAFKFFVLANVIACACSVVSLLFLCALGRYSSNPGHVFLLFLHDLLMMSLVLAGCSAATAIGFLGKYGNTKSGWMPICDQFGQFCNRGTISMMLSYLSMVCLLILTVTSANKSRQIHV</sequence>
<feature type="chain" id="PRO_0000391553" description="CASP-like protein 1F1">
    <location>
        <begin position="1"/>
        <end position="179"/>
    </location>
</feature>
<feature type="topological domain" description="Cytoplasmic" evidence="2">
    <location>
        <begin position="1"/>
        <end position="16"/>
    </location>
</feature>
<feature type="transmembrane region" description="Helical" evidence="2">
    <location>
        <begin position="17"/>
        <end position="37"/>
    </location>
</feature>
<feature type="topological domain" description="Extracellular" evidence="2">
    <location>
        <begin position="38"/>
        <end position="65"/>
    </location>
</feature>
<feature type="transmembrane region" description="Helical" evidence="2">
    <location>
        <begin position="66"/>
        <end position="86"/>
    </location>
</feature>
<feature type="topological domain" description="Cytoplasmic" evidence="2">
    <location>
        <begin position="87"/>
        <end position="105"/>
    </location>
</feature>
<feature type="transmembrane region" description="Helical" evidence="2">
    <location>
        <begin position="106"/>
        <end position="126"/>
    </location>
</feature>
<feature type="topological domain" description="Extracellular" evidence="2">
    <location>
        <begin position="127"/>
        <end position="150"/>
    </location>
</feature>
<feature type="transmembrane region" description="Helical" evidence="2">
    <location>
        <begin position="151"/>
        <end position="171"/>
    </location>
</feature>
<feature type="topological domain" description="Cytoplasmic" evidence="2">
    <location>
        <begin position="172"/>
        <end position="179"/>
    </location>
</feature>
<feature type="glycosylation site" description="N-linked (GlcNAc...) asparagine" evidence="2">
    <location>
        <position position="59"/>
    </location>
</feature>
<dbReference type="EMBL" id="EQ973773">
    <property type="protein sequence ID" value="EEF51717.1"/>
    <property type="molecule type" value="Genomic_DNA"/>
</dbReference>
<dbReference type="SMR" id="B9RA90"/>
<dbReference type="STRING" id="3988.B9RA90"/>
<dbReference type="KEGG" id="rcu:8275516"/>
<dbReference type="eggNOG" id="ENOG502S695">
    <property type="taxonomic scope" value="Eukaryota"/>
</dbReference>
<dbReference type="InParanoid" id="B9RA90"/>
<dbReference type="OMA" id="GNTHTGW"/>
<dbReference type="OrthoDB" id="1904499at2759"/>
<dbReference type="Proteomes" id="UP000008311">
    <property type="component" value="Unassembled WGS sequence"/>
</dbReference>
<dbReference type="GO" id="GO:0005886">
    <property type="term" value="C:plasma membrane"/>
    <property type="evidence" value="ECO:0007669"/>
    <property type="project" value="UniProtKB-SubCell"/>
</dbReference>
<dbReference type="InterPro" id="IPR006459">
    <property type="entry name" value="CASP/CASPL"/>
</dbReference>
<dbReference type="InterPro" id="IPR006702">
    <property type="entry name" value="CASP_dom"/>
</dbReference>
<dbReference type="InterPro" id="IPR044173">
    <property type="entry name" value="CASPL"/>
</dbReference>
<dbReference type="NCBIfam" id="TIGR01569">
    <property type="entry name" value="A_tha_TIGR01569"/>
    <property type="match status" value="1"/>
</dbReference>
<dbReference type="PANTHER" id="PTHR36488">
    <property type="entry name" value="CASP-LIKE PROTEIN 1U1"/>
    <property type="match status" value="1"/>
</dbReference>
<dbReference type="PANTHER" id="PTHR36488:SF8">
    <property type="entry name" value="CASP-LIKE PROTEIN 1U1"/>
    <property type="match status" value="1"/>
</dbReference>
<dbReference type="Pfam" id="PF04535">
    <property type="entry name" value="CASP_dom"/>
    <property type="match status" value="1"/>
</dbReference>
<organism>
    <name type="scientific">Ricinus communis</name>
    <name type="common">Castor bean</name>
    <dbReference type="NCBI Taxonomy" id="3988"/>
    <lineage>
        <taxon>Eukaryota</taxon>
        <taxon>Viridiplantae</taxon>
        <taxon>Streptophyta</taxon>
        <taxon>Embryophyta</taxon>
        <taxon>Tracheophyta</taxon>
        <taxon>Spermatophyta</taxon>
        <taxon>Magnoliopsida</taxon>
        <taxon>eudicotyledons</taxon>
        <taxon>Gunneridae</taxon>
        <taxon>Pentapetalae</taxon>
        <taxon>rosids</taxon>
        <taxon>fabids</taxon>
        <taxon>Malpighiales</taxon>
        <taxon>Euphorbiaceae</taxon>
        <taxon>Acalyphoideae</taxon>
        <taxon>Acalypheae</taxon>
        <taxon>Ricinus</taxon>
    </lineage>
</organism>
<comment type="subunit">
    <text evidence="1">Homodimer and heterodimers.</text>
</comment>
<comment type="subcellular location">
    <subcellularLocation>
        <location evidence="1">Cell membrane</location>
        <topology evidence="1">Multi-pass membrane protein</topology>
    </subcellularLocation>
</comment>
<comment type="similarity">
    <text evidence="3">Belongs to the Casparian strip membrane proteins (CASP) family.</text>
</comment>
<evidence type="ECO:0000250" key="1"/>
<evidence type="ECO:0000255" key="2"/>
<evidence type="ECO:0000305" key="3"/>
<proteinExistence type="evidence at transcript level"/>
<reference key="1">
    <citation type="journal article" date="2010" name="Nat. Biotechnol.">
        <title>Draft genome sequence of the oilseed species Ricinus communis.</title>
        <authorList>
            <person name="Chan A.P."/>
            <person name="Crabtree J."/>
            <person name="Zhao Q."/>
            <person name="Lorenzi H."/>
            <person name="Orvis J."/>
            <person name="Puiu D."/>
            <person name="Melake-Berhan A."/>
            <person name="Jones K.M."/>
            <person name="Redman J."/>
            <person name="Chen G."/>
            <person name="Cahoon E.B."/>
            <person name="Gedil M."/>
            <person name="Stanke M."/>
            <person name="Haas B.J."/>
            <person name="Wortman J.R."/>
            <person name="Fraser-Liggett C.M."/>
            <person name="Ravel J."/>
            <person name="Rabinowicz P.D."/>
        </authorList>
    </citation>
    <scope>NUCLEOTIDE SEQUENCE [LARGE SCALE GENOMIC DNA]</scope>
    <source>
        <strain>cv. Hale</strain>
    </source>
</reference>
<reference key="2">
    <citation type="journal article" date="2014" name="Plant Physiol.">
        <title>Functional and evolutionary analysis of the CASPARIAN STRIP MEMBRANE DOMAIN PROTEIN family.</title>
        <authorList>
            <person name="Roppolo D."/>
            <person name="Boeckmann B."/>
            <person name="Pfister A."/>
            <person name="Boutet E."/>
            <person name="Rubio M.C."/>
            <person name="Denervaud-Tendon V."/>
            <person name="Vermeer J.E."/>
            <person name="Gheyselinck J."/>
            <person name="Xenarios I."/>
            <person name="Geldner N."/>
        </authorList>
    </citation>
    <scope>GENE FAMILY</scope>
    <scope>NOMENCLATURE</scope>
</reference>
<keyword id="KW-1003">Cell membrane</keyword>
<keyword id="KW-0325">Glycoprotein</keyword>
<keyword id="KW-0472">Membrane</keyword>
<keyword id="KW-1185">Reference proteome</keyword>
<keyword id="KW-0812">Transmembrane</keyword>
<keyword id="KW-1133">Transmembrane helix</keyword>
<accession>B9RA90</accession>
<name>CSPL8_RICCO</name>
<gene>
    <name type="ORF">RCOM_1504680</name>
</gene>
<protein>
    <recommendedName>
        <fullName>CASP-like protein 1F1</fullName>
        <shortName>RcCASPL1F1</shortName>
    </recommendedName>
</protein>